<proteinExistence type="inferred from homology"/>
<protein>
    <recommendedName>
        <fullName evidence="1">Acetyl-coenzyme A carboxylase carboxyl transferase subunit beta</fullName>
        <shortName evidence="1">ACCase subunit beta</shortName>
        <shortName evidence="1">Acetyl-CoA carboxylase carboxyltransferase subunit beta</shortName>
        <ecNumber evidence="1">2.1.3.15</ecNumber>
    </recommendedName>
</protein>
<sequence>MAMAETPVPKKGDKTKVAAERRGGWLSRIAPGVRGAFAKRETPENLWVKCPDTGEMIYRSDLEAALWVTPAGRHMRIGPELRFKFTFDDGEHEVLPTPAVFEDPLRFSDGKPYKERLAAARKATGEQDAMAIGYGKVGGAPAVVLVQDFAFMGGSLGMAAGEGFIAAAEAAIARQVPLVAFTAAGGARMQEGALSLMQMARTTLAINMLKDAGLPYVVVLTDPTTGGVTASYAMLGDVHLAEPGALIGFAGPRVIEQTIRETLPPGFQRSEYLVEKGMVDRVTPRKELPAVLGSILGTLMMGRGLKAA</sequence>
<comment type="function">
    <text evidence="1">Component of the acetyl coenzyme A carboxylase (ACC) complex. Biotin carboxylase (BC) catalyzes the carboxylation of biotin on its carrier protein (BCCP) and then the CO(2) group is transferred by the transcarboxylase to acetyl-CoA to form malonyl-CoA.</text>
</comment>
<comment type="catalytic activity">
    <reaction evidence="1">
        <text>N(6)-carboxybiotinyl-L-lysyl-[protein] + acetyl-CoA = N(6)-biotinyl-L-lysyl-[protein] + malonyl-CoA</text>
        <dbReference type="Rhea" id="RHEA:54728"/>
        <dbReference type="Rhea" id="RHEA-COMP:10505"/>
        <dbReference type="Rhea" id="RHEA-COMP:10506"/>
        <dbReference type="ChEBI" id="CHEBI:57288"/>
        <dbReference type="ChEBI" id="CHEBI:57384"/>
        <dbReference type="ChEBI" id="CHEBI:83144"/>
        <dbReference type="ChEBI" id="CHEBI:83145"/>
        <dbReference type="EC" id="2.1.3.15"/>
    </reaction>
</comment>
<comment type="pathway">
    <text evidence="1">Lipid metabolism; malonyl-CoA biosynthesis; malonyl-CoA from acetyl-CoA: step 1/1.</text>
</comment>
<comment type="subunit">
    <text evidence="1">Acetyl-CoA carboxylase is a heterohexamer composed of biotin carboxyl carrier protein (AccB), biotin carboxylase (AccC) and two subunits each of ACCase subunit alpha (AccA) and ACCase subunit beta (AccD).</text>
</comment>
<comment type="subcellular location">
    <subcellularLocation>
        <location evidence="1">Cytoplasm</location>
    </subcellularLocation>
</comment>
<comment type="similarity">
    <text evidence="1">Belongs to the AccD/PCCB family.</text>
</comment>
<name>ACCD_CAUSK</name>
<gene>
    <name evidence="1" type="primary">accD</name>
    <name type="ordered locus">Caul_4978</name>
</gene>
<evidence type="ECO:0000255" key="1">
    <source>
        <dbReference type="HAMAP-Rule" id="MF_01395"/>
    </source>
</evidence>
<evidence type="ECO:0000255" key="2">
    <source>
        <dbReference type="PROSITE-ProRule" id="PRU01136"/>
    </source>
</evidence>
<accession>B0T695</accession>
<keyword id="KW-0067">ATP-binding</keyword>
<keyword id="KW-0963">Cytoplasm</keyword>
<keyword id="KW-0275">Fatty acid biosynthesis</keyword>
<keyword id="KW-0276">Fatty acid metabolism</keyword>
<keyword id="KW-0444">Lipid biosynthesis</keyword>
<keyword id="KW-0443">Lipid metabolism</keyword>
<keyword id="KW-0547">Nucleotide-binding</keyword>
<keyword id="KW-0808">Transferase</keyword>
<feature type="chain" id="PRO_0000389712" description="Acetyl-coenzyme A carboxylase carboxyl transferase subunit beta">
    <location>
        <begin position="1"/>
        <end position="308"/>
    </location>
</feature>
<feature type="domain" description="CoA carboxyltransferase N-terminal" evidence="2">
    <location>
        <begin position="46"/>
        <end position="308"/>
    </location>
</feature>
<dbReference type="EC" id="2.1.3.15" evidence="1"/>
<dbReference type="EMBL" id="CP000927">
    <property type="protein sequence ID" value="ABZ74098.1"/>
    <property type="molecule type" value="Genomic_DNA"/>
</dbReference>
<dbReference type="SMR" id="B0T695"/>
<dbReference type="STRING" id="366602.Caul_4978"/>
<dbReference type="KEGG" id="cak:Caul_4978"/>
<dbReference type="eggNOG" id="COG0777">
    <property type="taxonomic scope" value="Bacteria"/>
</dbReference>
<dbReference type="HOGENOM" id="CLU_015486_1_1_5"/>
<dbReference type="OrthoDB" id="9772975at2"/>
<dbReference type="UniPathway" id="UPA00655">
    <property type="reaction ID" value="UER00711"/>
</dbReference>
<dbReference type="GO" id="GO:0009329">
    <property type="term" value="C:acetate CoA-transferase complex"/>
    <property type="evidence" value="ECO:0007669"/>
    <property type="project" value="TreeGrafter"/>
</dbReference>
<dbReference type="GO" id="GO:0003989">
    <property type="term" value="F:acetyl-CoA carboxylase activity"/>
    <property type="evidence" value="ECO:0007669"/>
    <property type="project" value="InterPro"/>
</dbReference>
<dbReference type="GO" id="GO:0005524">
    <property type="term" value="F:ATP binding"/>
    <property type="evidence" value="ECO:0007669"/>
    <property type="project" value="UniProtKB-KW"/>
</dbReference>
<dbReference type="GO" id="GO:0016743">
    <property type="term" value="F:carboxyl- or carbamoyltransferase activity"/>
    <property type="evidence" value="ECO:0007669"/>
    <property type="project" value="UniProtKB-UniRule"/>
</dbReference>
<dbReference type="GO" id="GO:0006633">
    <property type="term" value="P:fatty acid biosynthetic process"/>
    <property type="evidence" value="ECO:0007669"/>
    <property type="project" value="UniProtKB-KW"/>
</dbReference>
<dbReference type="GO" id="GO:2001295">
    <property type="term" value="P:malonyl-CoA biosynthetic process"/>
    <property type="evidence" value="ECO:0007669"/>
    <property type="project" value="UniProtKB-UniRule"/>
</dbReference>
<dbReference type="Gene3D" id="3.90.226.10">
    <property type="entry name" value="2-enoyl-CoA Hydratase, Chain A, domain 1"/>
    <property type="match status" value="1"/>
</dbReference>
<dbReference type="HAMAP" id="MF_01395">
    <property type="entry name" value="AcetylCoA_CT_beta"/>
    <property type="match status" value="1"/>
</dbReference>
<dbReference type="InterPro" id="IPR034733">
    <property type="entry name" value="AcCoA_carboxyl_beta"/>
</dbReference>
<dbReference type="InterPro" id="IPR000438">
    <property type="entry name" value="Acetyl_CoA_COase_Trfase_b_su"/>
</dbReference>
<dbReference type="InterPro" id="IPR029045">
    <property type="entry name" value="ClpP/crotonase-like_dom_sf"/>
</dbReference>
<dbReference type="InterPro" id="IPR011762">
    <property type="entry name" value="COA_CT_N"/>
</dbReference>
<dbReference type="PANTHER" id="PTHR42995">
    <property type="entry name" value="ACETYL-COENZYME A CARBOXYLASE CARBOXYL TRANSFERASE SUBUNIT BETA, CHLOROPLASTIC"/>
    <property type="match status" value="1"/>
</dbReference>
<dbReference type="PANTHER" id="PTHR42995:SF5">
    <property type="entry name" value="ACETYL-COENZYME A CARBOXYLASE CARBOXYL TRANSFERASE SUBUNIT BETA, CHLOROPLASTIC"/>
    <property type="match status" value="1"/>
</dbReference>
<dbReference type="Pfam" id="PF01039">
    <property type="entry name" value="Carboxyl_trans"/>
    <property type="match status" value="1"/>
</dbReference>
<dbReference type="PRINTS" id="PR01070">
    <property type="entry name" value="ACCCTRFRASEB"/>
</dbReference>
<dbReference type="SUPFAM" id="SSF52096">
    <property type="entry name" value="ClpP/crotonase"/>
    <property type="match status" value="1"/>
</dbReference>
<dbReference type="PROSITE" id="PS50980">
    <property type="entry name" value="COA_CT_NTER"/>
    <property type="match status" value="1"/>
</dbReference>
<reference key="1">
    <citation type="submission" date="2008-01" db="EMBL/GenBank/DDBJ databases">
        <title>Complete sequence of chromosome of Caulobacter sp. K31.</title>
        <authorList>
            <consortium name="US DOE Joint Genome Institute"/>
            <person name="Copeland A."/>
            <person name="Lucas S."/>
            <person name="Lapidus A."/>
            <person name="Barry K."/>
            <person name="Glavina del Rio T."/>
            <person name="Dalin E."/>
            <person name="Tice H."/>
            <person name="Pitluck S."/>
            <person name="Bruce D."/>
            <person name="Goodwin L."/>
            <person name="Thompson L.S."/>
            <person name="Brettin T."/>
            <person name="Detter J.C."/>
            <person name="Han C."/>
            <person name="Schmutz J."/>
            <person name="Larimer F."/>
            <person name="Land M."/>
            <person name="Hauser L."/>
            <person name="Kyrpides N."/>
            <person name="Kim E."/>
            <person name="Stephens C."/>
            <person name="Richardson P."/>
        </authorList>
    </citation>
    <scope>NUCLEOTIDE SEQUENCE [LARGE SCALE GENOMIC DNA]</scope>
    <source>
        <strain>K31</strain>
    </source>
</reference>
<organism>
    <name type="scientific">Caulobacter sp. (strain K31)</name>
    <dbReference type="NCBI Taxonomy" id="366602"/>
    <lineage>
        <taxon>Bacteria</taxon>
        <taxon>Pseudomonadati</taxon>
        <taxon>Pseudomonadota</taxon>
        <taxon>Alphaproteobacteria</taxon>
        <taxon>Caulobacterales</taxon>
        <taxon>Caulobacteraceae</taxon>
        <taxon>Caulobacter</taxon>
    </lineage>
</organism>